<keyword id="KW-1185">Reference proteome</keyword>
<keyword id="KW-0687">Ribonucleoprotein</keyword>
<keyword id="KW-0689">Ribosomal protein</keyword>
<keyword id="KW-0694">RNA-binding</keyword>
<keyword id="KW-0699">rRNA-binding</keyword>
<proteinExistence type="inferred from homology"/>
<reference key="1">
    <citation type="submission" date="2006-02" db="EMBL/GenBank/DDBJ databases">
        <title>Complete sequence of chromosome of Rhodoferax ferrireducens DSM 15236.</title>
        <authorList>
            <person name="Copeland A."/>
            <person name="Lucas S."/>
            <person name="Lapidus A."/>
            <person name="Barry K."/>
            <person name="Detter J.C."/>
            <person name="Glavina del Rio T."/>
            <person name="Hammon N."/>
            <person name="Israni S."/>
            <person name="Pitluck S."/>
            <person name="Brettin T."/>
            <person name="Bruce D."/>
            <person name="Han C."/>
            <person name="Tapia R."/>
            <person name="Gilna P."/>
            <person name="Kiss H."/>
            <person name="Schmutz J."/>
            <person name="Larimer F."/>
            <person name="Land M."/>
            <person name="Kyrpides N."/>
            <person name="Ivanova N."/>
            <person name="Richardson P."/>
        </authorList>
    </citation>
    <scope>NUCLEOTIDE SEQUENCE [LARGE SCALE GENOMIC DNA]</scope>
    <source>
        <strain>ATCC BAA-621 / DSM 15236 / T118</strain>
    </source>
</reference>
<feature type="chain" id="PRO_1000005328" description="Small ribosomal subunit protein bS6">
    <location>
        <begin position="1"/>
        <end position="121"/>
    </location>
</feature>
<feature type="region of interest" description="Disordered" evidence="2">
    <location>
        <begin position="96"/>
        <end position="121"/>
    </location>
</feature>
<feature type="compositionally biased region" description="Basic and acidic residues" evidence="2">
    <location>
        <begin position="105"/>
        <end position="115"/>
    </location>
</feature>
<dbReference type="EMBL" id="CP000267">
    <property type="protein sequence ID" value="ABD69917.1"/>
    <property type="molecule type" value="Genomic_DNA"/>
</dbReference>
<dbReference type="RefSeq" id="WP_011464485.1">
    <property type="nucleotide sequence ID" value="NC_007908.1"/>
</dbReference>
<dbReference type="SMR" id="Q21WD6"/>
<dbReference type="STRING" id="338969.Rfer_2193"/>
<dbReference type="KEGG" id="rfr:Rfer_2193"/>
<dbReference type="eggNOG" id="COG0360">
    <property type="taxonomic scope" value="Bacteria"/>
</dbReference>
<dbReference type="HOGENOM" id="CLU_113441_6_1_4"/>
<dbReference type="OrthoDB" id="9812702at2"/>
<dbReference type="Proteomes" id="UP000008332">
    <property type="component" value="Chromosome"/>
</dbReference>
<dbReference type="GO" id="GO:0022627">
    <property type="term" value="C:cytosolic small ribosomal subunit"/>
    <property type="evidence" value="ECO:0007669"/>
    <property type="project" value="TreeGrafter"/>
</dbReference>
<dbReference type="GO" id="GO:0070181">
    <property type="term" value="F:small ribosomal subunit rRNA binding"/>
    <property type="evidence" value="ECO:0007669"/>
    <property type="project" value="TreeGrafter"/>
</dbReference>
<dbReference type="GO" id="GO:0003735">
    <property type="term" value="F:structural constituent of ribosome"/>
    <property type="evidence" value="ECO:0007669"/>
    <property type="project" value="InterPro"/>
</dbReference>
<dbReference type="GO" id="GO:0006412">
    <property type="term" value="P:translation"/>
    <property type="evidence" value="ECO:0007669"/>
    <property type="project" value="UniProtKB-UniRule"/>
</dbReference>
<dbReference type="CDD" id="cd00473">
    <property type="entry name" value="bS6"/>
    <property type="match status" value="1"/>
</dbReference>
<dbReference type="Gene3D" id="3.30.70.60">
    <property type="match status" value="1"/>
</dbReference>
<dbReference type="HAMAP" id="MF_00360">
    <property type="entry name" value="Ribosomal_bS6"/>
    <property type="match status" value="1"/>
</dbReference>
<dbReference type="InterPro" id="IPR000529">
    <property type="entry name" value="Ribosomal_bS6"/>
</dbReference>
<dbReference type="InterPro" id="IPR035980">
    <property type="entry name" value="Ribosomal_bS6_sf"/>
</dbReference>
<dbReference type="InterPro" id="IPR020814">
    <property type="entry name" value="Ribosomal_S6_plastid/chlpt"/>
</dbReference>
<dbReference type="InterPro" id="IPR014717">
    <property type="entry name" value="Transl_elong_EF1B/ribsomal_bS6"/>
</dbReference>
<dbReference type="NCBIfam" id="TIGR00166">
    <property type="entry name" value="S6"/>
    <property type="match status" value="1"/>
</dbReference>
<dbReference type="PANTHER" id="PTHR21011">
    <property type="entry name" value="MITOCHONDRIAL 28S RIBOSOMAL PROTEIN S6"/>
    <property type="match status" value="1"/>
</dbReference>
<dbReference type="PANTHER" id="PTHR21011:SF1">
    <property type="entry name" value="SMALL RIBOSOMAL SUBUNIT PROTEIN BS6M"/>
    <property type="match status" value="1"/>
</dbReference>
<dbReference type="Pfam" id="PF01250">
    <property type="entry name" value="Ribosomal_S6"/>
    <property type="match status" value="1"/>
</dbReference>
<dbReference type="SUPFAM" id="SSF54995">
    <property type="entry name" value="Ribosomal protein S6"/>
    <property type="match status" value="1"/>
</dbReference>
<name>RS6_ALBFT</name>
<gene>
    <name evidence="1" type="primary">rpsF</name>
    <name type="ordered locus">Rfer_2193</name>
</gene>
<comment type="function">
    <text evidence="1">Binds together with bS18 to 16S ribosomal RNA.</text>
</comment>
<comment type="similarity">
    <text evidence="1">Belongs to the bacterial ribosomal protein bS6 family.</text>
</comment>
<evidence type="ECO:0000255" key="1">
    <source>
        <dbReference type="HAMAP-Rule" id="MF_00360"/>
    </source>
</evidence>
<evidence type="ECO:0000256" key="2">
    <source>
        <dbReference type="SAM" id="MobiDB-lite"/>
    </source>
</evidence>
<evidence type="ECO:0000305" key="3"/>
<accession>Q21WD6</accession>
<sequence length="121" mass="13956">MRHYEIILMIHPDQSEQVPAMLERYKGMITAGGGKVHRVEDWGRRQLVYMINKLAKAHYLCVNIEADQAVMAELEHAFKFNDAVLRHLTVLKKKADTGPSSMMKTVEREDARKTQQAEYQA</sequence>
<organism>
    <name type="scientific">Albidiferax ferrireducens (strain ATCC BAA-621 / DSM 15236 / T118)</name>
    <name type="common">Rhodoferax ferrireducens</name>
    <dbReference type="NCBI Taxonomy" id="338969"/>
    <lineage>
        <taxon>Bacteria</taxon>
        <taxon>Pseudomonadati</taxon>
        <taxon>Pseudomonadota</taxon>
        <taxon>Betaproteobacteria</taxon>
        <taxon>Burkholderiales</taxon>
        <taxon>Comamonadaceae</taxon>
        <taxon>Rhodoferax</taxon>
    </lineage>
</organism>
<protein>
    <recommendedName>
        <fullName evidence="1">Small ribosomal subunit protein bS6</fullName>
    </recommendedName>
    <alternativeName>
        <fullName evidence="3">30S ribosomal protein S6</fullName>
    </alternativeName>
</protein>